<organism>
    <name type="scientific">Pongo abelii</name>
    <name type="common">Sumatran orangutan</name>
    <name type="synonym">Pongo pygmaeus abelii</name>
    <dbReference type="NCBI Taxonomy" id="9601"/>
    <lineage>
        <taxon>Eukaryota</taxon>
        <taxon>Metazoa</taxon>
        <taxon>Chordata</taxon>
        <taxon>Craniata</taxon>
        <taxon>Vertebrata</taxon>
        <taxon>Euteleostomi</taxon>
        <taxon>Mammalia</taxon>
        <taxon>Eutheria</taxon>
        <taxon>Euarchontoglires</taxon>
        <taxon>Primates</taxon>
        <taxon>Haplorrhini</taxon>
        <taxon>Catarrhini</taxon>
        <taxon>Hominidae</taxon>
        <taxon>Pongo</taxon>
    </lineage>
</organism>
<evidence type="ECO:0000250" key="1">
    <source>
        <dbReference type="UniProtKB" id="Q9BY42"/>
    </source>
</evidence>
<evidence type="ECO:0000256" key="2">
    <source>
        <dbReference type="SAM" id="MobiDB-lite"/>
    </source>
</evidence>
<evidence type="ECO:0000305" key="3"/>
<accession>Q5R9P9</accession>
<comment type="function">
    <text evidence="1">Replication termination factor which is a component of the elongating replisome. Required for ATR pathway signaling upon DNA damage and has a positive activity during DNA replication. Might function to facilitate fork pausing at replication fork barriers like the rDNA. May be globally required to stimulate ATR signaling after the fork stalls or encounters a lesion. Interacts with nascent DNA.</text>
</comment>
<comment type="subunit">
    <text evidence="1">Interacts with DDI2; probably also interacts with DDI1.</text>
</comment>
<comment type="subcellular location">
    <subcellularLocation>
        <location evidence="1">Chromosome</location>
    </subcellularLocation>
    <text evidence="1">Localizes at the replication fork.</text>
</comment>
<comment type="PTM">
    <text evidence="1">Undergoes proteasomal degradation, via DDI1 and DDI2. Removal from stalled replisomes and degradation are required for genome stability.</text>
</comment>
<comment type="similarity">
    <text evidence="3">Belongs to the rtf2 family.</text>
</comment>
<proteinExistence type="evidence at transcript level"/>
<keyword id="KW-0158">Chromosome</keyword>
<keyword id="KW-0597">Phosphoprotein</keyword>
<keyword id="KW-1185">Reference proteome</keyword>
<gene>
    <name type="primary">RTF2</name>
    <name type="synonym">RTFDC1</name>
</gene>
<name>RTF2_PONAB</name>
<reference key="1">
    <citation type="submission" date="2004-11" db="EMBL/GenBank/DDBJ databases">
        <authorList>
            <consortium name="The German cDNA consortium"/>
        </authorList>
    </citation>
    <scope>NUCLEOTIDE SEQUENCE [LARGE SCALE MRNA]</scope>
    <source>
        <tissue>Brain cortex</tissue>
        <tissue>Kidney</tissue>
    </source>
</reference>
<dbReference type="EMBL" id="CR857368">
    <property type="protein sequence ID" value="CAH89663.1"/>
    <property type="molecule type" value="mRNA"/>
</dbReference>
<dbReference type="EMBL" id="CR859334">
    <property type="protein sequence ID" value="CAH91511.1"/>
    <property type="molecule type" value="mRNA"/>
</dbReference>
<dbReference type="RefSeq" id="NP_001125889.1">
    <property type="nucleotide sequence ID" value="NM_001132417.2"/>
</dbReference>
<dbReference type="FunCoup" id="Q5R9P9">
    <property type="interactions" value="3603"/>
</dbReference>
<dbReference type="STRING" id="9601.ENSPPYP00000012459"/>
<dbReference type="GeneID" id="100172821"/>
<dbReference type="KEGG" id="pon:100172821"/>
<dbReference type="CTD" id="51507"/>
<dbReference type="eggNOG" id="KOG3113">
    <property type="taxonomic scope" value="Eukaryota"/>
</dbReference>
<dbReference type="HOGENOM" id="CLU_048955_1_0_1"/>
<dbReference type="InParanoid" id="Q5R9P9"/>
<dbReference type="OrthoDB" id="247013at2759"/>
<dbReference type="TreeFam" id="TF314621"/>
<dbReference type="Proteomes" id="UP000001595">
    <property type="component" value="Chromosome 20"/>
</dbReference>
<dbReference type="GO" id="GO:0005634">
    <property type="term" value="C:nucleus"/>
    <property type="evidence" value="ECO:0007669"/>
    <property type="project" value="TreeGrafter"/>
</dbReference>
<dbReference type="GO" id="GO:0005657">
    <property type="term" value="C:replication fork"/>
    <property type="evidence" value="ECO:0000250"/>
    <property type="project" value="UniProtKB"/>
</dbReference>
<dbReference type="GO" id="GO:0003677">
    <property type="term" value="F:DNA binding"/>
    <property type="evidence" value="ECO:0000250"/>
    <property type="project" value="UniProtKB"/>
</dbReference>
<dbReference type="GO" id="GO:0072711">
    <property type="term" value="P:cellular response to hydroxyurea"/>
    <property type="evidence" value="ECO:0000250"/>
    <property type="project" value="UniProtKB"/>
</dbReference>
<dbReference type="GO" id="GO:1902979">
    <property type="term" value="P:mitotic DNA replication termination"/>
    <property type="evidence" value="ECO:0007669"/>
    <property type="project" value="InterPro"/>
</dbReference>
<dbReference type="GO" id="GO:0097752">
    <property type="term" value="P:regulation of DNA stability"/>
    <property type="evidence" value="ECO:0000250"/>
    <property type="project" value="UniProtKB"/>
</dbReference>
<dbReference type="CDD" id="cd16653">
    <property type="entry name" value="RING-like_Rtf2"/>
    <property type="match status" value="1"/>
</dbReference>
<dbReference type="InterPro" id="IPR006735">
    <property type="entry name" value="Rtf2"/>
</dbReference>
<dbReference type="InterPro" id="IPR027799">
    <property type="entry name" value="Rtf2_RING-finger"/>
</dbReference>
<dbReference type="PANTHER" id="PTHR12775">
    <property type="entry name" value="PROTEIN C20ORF43 HOMOLOG"/>
    <property type="match status" value="1"/>
</dbReference>
<dbReference type="PANTHER" id="PTHR12775:SF0">
    <property type="entry name" value="REPLICATION TERMINATION FACTOR 2"/>
    <property type="match status" value="1"/>
</dbReference>
<dbReference type="Pfam" id="PF04641">
    <property type="entry name" value="Rtf2"/>
    <property type="match status" value="1"/>
</dbReference>
<protein>
    <recommendedName>
        <fullName evidence="3">Replication termination factor 2</fullName>
        <shortName>RTF2</shortName>
    </recommendedName>
    <alternativeName>
        <fullName>Replication termination factor 2 domain-containing protein 1</fullName>
    </alternativeName>
</protein>
<sequence>MGCDGGTIPKRHELVKGPKKVEKVDKDAELVAQWNYCTLSQEILRRPIVACELGRLYNKDAVIEFLLDKSAEKALGKAASHIKSIKNVTELKLSDNPAWEGDKGNTKGDKHDDLQRARFICPVVGLEMNGRHRFCFLRCCGCVFSERALKEIKAEVCHTCGAAFQEDDVIVLNGTKEDVDVLKTRMEERRLRAKLEKKTKKPKAAESVSKPDVSEEAPGPSKVKTGKPEEASLDSREKKTNLAPKSTATNESSSGKAGKPPCGATKRSIADSEESEAYKSLFTTHSSAKRSKEESAHWVTHTSYCF</sequence>
<feature type="chain" id="PRO_0000327235" description="Replication termination factor 2">
    <location>
        <begin position="1"/>
        <end position="306"/>
    </location>
</feature>
<feature type="region of interest" description="Disordered" evidence="2">
    <location>
        <begin position="193"/>
        <end position="306"/>
    </location>
</feature>
<feature type="compositionally biased region" description="Basic and acidic residues" evidence="2">
    <location>
        <begin position="226"/>
        <end position="240"/>
    </location>
</feature>
<feature type="compositionally biased region" description="Polar residues" evidence="2">
    <location>
        <begin position="243"/>
        <end position="255"/>
    </location>
</feature>
<feature type="modified residue" description="Phosphoserine" evidence="1">
    <location>
        <position position="287"/>
    </location>
</feature>